<comment type="function">
    <text evidence="1">Part of the ABC transporter complex MetNIQ involved in methionine import. Responsible for energy coupling to the transport system.</text>
</comment>
<comment type="catalytic activity">
    <reaction evidence="1">
        <text>L-methionine(out) + ATP + H2O = L-methionine(in) + ADP + phosphate + H(+)</text>
        <dbReference type="Rhea" id="RHEA:29779"/>
        <dbReference type="ChEBI" id="CHEBI:15377"/>
        <dbReference type="ChEBI" id="CHEBI:15378"/>
        <dbReference type="ChEBI" id="CHEBI:30616"/>
        <dbReference type="ChEBI" id="CHEBI:43474"/>
        <dbReference type="ChEBI" id="CHEBI:57844"/>
        <dbReference type="ChEBI" id="CHEBI:456216"/>
        <dbReference type="EC" id="7.4.2.11"/>
    </reaction>
</comment>
<comment type="catalytic activity">
    <reaction evidence="1">
        <text>D-methionine(out) + ATP + H2O = D-methionine(in) + ADP + phosphate + H(+)</text>
        <dbReference type="Rhea" id="RHEA:29767"/>
        <dbReference type="ChEBI" id="CHEBI:15377"/>
        <dbReference type="ChEBI" id="CHEBI:15378"/>
        <dbReference type="ChEBI" id="CHEBI:30616"/>
        <dbReference type="ChEBI" id="CHEBI:43474"/>
        <dbReference type="ChEBI" id="CHEBI:57932"/>
        <dbReference type="ChEBI" id="CHEBI:456216"/>
        <dbReference type="EC" id="7.4.2.11"/>
    </reaction>
</comment>
<comment type="subunit">
    <text evidence="1">The complex is composed of two ATP-binding proteins (MetN), two transmembrane proteins (MetI) and a solute-binding protein (MetQ).</text>
</comment>
<comment type="subcellular location">
    <subcellularLocation>
        <location evidence="1">Cell inner membrane</location>
        <topology evidence="1">Peripheral membrane protein</topology>
    </subcellularLocation>
</comment>
<comment type="similarity">
    <text evidence="1">Belongs to the ABC transporter superfamily. Methionine importer (TC 3.A.1.24) family.</text>
</comment>
<gene>
    <name evidence="1" type="primary">metN1</name>
    <name type="ordered locus">STM0247</name>
</gene>
<keyword id="KW-0029">Amino-acid transport</keyword>
<keyword id="KW-0067">ATP-binding</keyword>
<keyword id="KW-0997">Cell inner membrane</keyword>
<keyword id="KW-1003">Cell membrane</keyword>
<keyword id="KW-0472">Membrane</keyword>
<keyword id="KW-0547">Nucleotide-binding</keyword>
<keyword id="KW-1185">Reference proteome</keyword>
<keyword id="KW-1278">Translocase</keyword>
<keyword id="KW-0813">Transport</keyword>
<feature type="chain" id="PRO_0000092507" description="Methionine import ATP-binding protein MetN 1">
    <location>
        <begin position="1"/>
        <end position="343"/>
    </location>
</feature>
<feature type="domain" description="ABC transporter" evidence="1">
    <location>
        <begin position="2"/>
        <end position="241"/>
    </location>
</feature>
<feature type="binding site" evidence="1">
    <location>
        <begin position="38"/>
        <end position="45"/>
    </location>
    <ligand>
        <name>ATP</name>
        <dbReference type="ChEBI" id="CHEBI:30616"/>
    </ligand>
</feature>
<name>METN1_SALTY</name>
<reference key="1">
    <citation type="journal article" date="2001" name="Nature">
        <title>Complete genome sequence of Salmonella enterica serovar Typhimurium LT2.</title>
        <authorList>
            <person name="McClelland M."/>
            <person name="Sanderson K.E."/>
            <person name="Spieth J."/>
            <person name="Clifton S.W."/>
            <person name="Latreille P."/>
            <person name="Courtney L."/>
            <person name="Porwollik S."/>
            <person name="Ali J."/>
            <person name="Dante M."/>
            <person name="Du F."/>
            <person name="Hou S."/>
            <person name="Layman D."/>
            <person name="Leonard S."/>
            <person name="Nguyen C."/>
            <person name="Scott K."/>
            <person name="Holmes A."/>
            <person name="Grewal N."/>
            <person name="Mulvaney E."/>
            <person name="Ryan E."/>
            <person name="Sun H."/>
            <person name="Florea L."/>
            <person name="Miller W."/>
            <person name="Stoneking T."/>
            <person name="Nhan M."/>
            <person name="Waterston R."/>
            <person name="Wilson R.K."/>
        </authorList>
    </citation>
    <scope>NUCLEOTIDE SEQUENCE [LARGE SCALE GENOMIC DNA]</scope>
    <source>
        <strain>LT2 / SGSC1412 / ATCC 700720</strain>
    </source>
</reference>
<organism>
    <name type="scientific">Salmonella typhimurium (strain LT2 / SGSC1412 / ATCC 700720)</name>
    <dbReference type="NCBI Taxonomy" id="99287"/>
    <lineage>
        <taxon>Bacteria</taxon>
        <taxon>Pseudomonadati</taxon>
        <taxon>Pseudomonadota</taxon>
        <taxon>Gammaproteobacteria</taxon>
        <taxon>Enterobacterales</taxon>
        <taxon>Enterobacteriaceae</taxon>
        <taxon>Salmonella</taxon>
    </lineage>
</organism>
<evidence type="ECO:0000255" key="1">
    <source>
        <dbReference type="HAMAP-Rule" id="MF_01719"/>
    </source>
</evidence>
<dbReference type="EC" id="7.4.2.11" evidence="1"/>
<dbReference type="EMBL" id="AE006468">
    <property type="protein sequence ID" value="AAL19210.1"/>
    <property type="molecule type" value="Genomic_DNA"/>
</dbReference>
<dbReference type="SMR" id="Q8ZRM9"/>
<dbReference type="STRING" id="99287.STM0247"/>
<dbReference type="PaxDb" id="99287-STM0247"/>
<dbReference type="KEGG" id="stm:STM0247"/>
<dbReference type="PATRIC" id="fig|99287.12.peg.261"/>
<dbReference type="HOGENOM" id="CLU_000604_1_3_6"/>
<dbReference type="OMA" id="FANPKHA"/>
<dbReference type="PhylomeDB" id="Q8ZRM9"/>
<dbReference type="BioCyc" id="SENT99287:STM0247-MONOMER"/>
<dbReference type="Proteomes" id="UP000001014">
    <property type="component" value="Chromosome"/>
</dbReference>
<dbReference type="GO" id="GO:0009276">
    <property type="term" value="C:Gram-negative-bacterium-type cell wall"/>
    <property type="evidence" value="ECO:0007669"/>
    <property type="project" value="InterPro"/>
</dbReference>
<dbReference type="GO" id="GO:0005886">
    <property type="term" value="C:plasma membrane"/>
    <property type="evidence" value="ECO:0007669"/>
    <property type="project" value="UniProtKB-SubCell"/>
</dbReference>
<dbReference type="GO" id="GO:0033232">
    <property type="term" value="F:ABC-type D-methionine transporter activity"/>
    <property type="evidence" value="ECO:0007669"/>
    <property type="project" value="UniProtKB-EC"/>
</dbReference>
<dbReference type="GO" id="GO:0005524">
    <property type="term" value="F:ATP binding"/>
    <property type="evidence" value="ECO:0007669"/>
    <property type="project" value="UniProtKB-KW"/>
</dbReference>
<dbReference type="GO" id="GO:0016887">
    <property type="term" value="F:ATP hydrolysis activity"/>
    <property type="evidence" value="ECO:0007669"/>
    <property type="project" value="InterPro"/>
</dbReference>
<dbReference type="CDD" id="cd03258">
    <property type="entry name" value="ABC_MetN_methionine_transporter"/>
    <property type="match status" value="1"/>
</dbReference>
<dbReference type="FunFam" id="3.30.70.260:FF:000014">
    <property type="entry name" value="Methionine import ATP-binding protein MetN"/>
    <property type="match status" value="1"/>
</dbReference>
<dbReference type="FunFam" id="3.40.50.300:FF:000233">
    <property type="entry name" value="Methionine import ATP-binding protein MetN"/>
    <property type="match status" value="1"/>
</dbReference>
<dbReference type="Gene3D" id="3.30.70.260">
    <property type="match status" value="1"/>
</dbReference>
<dbReference type="Gene3D" id="3.40.50.300">
    <property type="entry name" value="P-loop containing nucleotide triphosphate hydrolases"/>
    <property type="match status" value="1"/>
</dbReference>
<dbReference type="InterPro" id="IPR003593">
    <property type="entry name" value="AAA+_ATPase"/>
</dbReference>
<dbReference type="InterPro" id="IPR012692">
    <property type="entry name" value="ABC_MetN_proteobac"/>
</dbReference>
<dbReference type="InterPro" id="IPR003439">
    <property type="entry name" value="ABC_transporter-like_ATP-bd"/>
</dbReference>
<dbReference type="InterPro" id="IPR017871">
    <property type="entry name" value="ABC_transporter-like_CS"/>
</dbReference>
<dbReference type="InterPro" id="IPR045865">
    <property type="entry name" value="ACT-like_dom_sf"/>
</dbReference>
<dbReference type="InterPro" id="IPR041701">
    <property type="entry name" value="MetN_ABC"/>
</dbReference>
<dbReference type="InterPro" id="IPR050086">
    <property type="entry name" value="MetN_ABC_transporter-like"/>
</dbReference>
<dbReference type="InterPro" id="IPR018449">
    <property type="entry name" value="NIL_domain"/>
</dbReference>
<dbReference type="InterPro" id="IPR027417">
    <property type="entry name" value="P-loop_NTPase"/>
</dbReference>
<dbReference type="NCBIfam" id="TIGR02314">
    <property type="entry name" value="ABC_MetN"/>
    <property type="match status" value="1"/>
</dbReference>
<dbReference type="PANTHER" id="PTHR43166">
    <property type="entry name" value="AMINO ACID IMPORT ATP-BINDING PROTEIN"/>
    <property type="match status" value="1"/>
</dbReference>
<dbReference type="PANTHER" id="PTHR43166:SF30">
    <property type="entry name" value="METHIONINE IMPORT ATP-BINDING PROTEIN METN"/>
    <property type="match status" value="1"/>
</dbReference>
<dbReference type="Pfam" id="PF00005">
    <property type="entry name" value="ABC_tran"/>
    <property type="match status" value="1"/>
</dbReference>
<dbReference type="Pfam" id="PF09383">
    <property type="entry name" value="NIL"/>
    <property type="match status" value="1"/>
</dbReference>
<dbReference type="SMART" id="SM00382">
    <property type="entry name" value="AAA"/>
    <property type="match status" value="1"/>
</dbReference>
<dbReference type="SMART" id="SM00930">
    <property type="entry name" value="NIL"/>
    <property type="match status" value="1"/>
</dbReference>
<dbReference type="SUPFAM" id="SSF55021">
    <property type="entry name" value="ACT-like"/>
    <property type="match status" value="1"/>
</dbReference>
<dbReference type="SUPFAM" id="SSF52540">
    <property type="entry name" value="P-loop containing nucleoside triphosphate hydrolases"/>
    <property type="match status" value="1"/>
</dbReference>
<dbReference type="PROSITE" id="PS00211">
    <property type="entry name" value="ABC_TRANSPORTER_1"/>
    <property type="match status" value="1"/>
</dbReference>
<dbReference type="PROSITE" id="PS50893">
    <property type="entry name" value="ABC_TRANSPORTER_2"/>
    <property type="match status" value="1"/>
</dbReference>
<dbReference type="PROSITE" id="PS51264">
    <property type="entry name" value="METN"/>
    <property type="match status" value="1"/>
</dbReference>
<proteinExistence type="inferred from homology"/>
<protein>
    <recommendedName>
        <fullName evidence="1">Methionine import ATP-binding protein MetN 1</fullName>
        <ecNumber evidence="1">7.4.2.11</ecNumber>
    </recommendedName>
</protein>
<sequence length="343" mass="37661">MIKLSNITKVFQQGTRTIQALNNVSLHVPAGQIYGVIGASGAGKSTLIRCVNLLERPTEGSVQVGGQELTTLSESELTKARRQIGMIFQHFNLLSSRTVFGNVALPLELDNTPKEEIKRRVTELLDLVGLGDKHDSYPANLSGGQKQRVAIARALASNPKVLLCDEATSALDPATTRSILELLKDINRRLGLTILLITHEMDVVKRICDCVAVISNGELIEQDTVSEVFSHPKTPLAQKFIQSTLHLDIPEDYQARLKASPETDSVPMLRMEFTGQSVDAPLLSETARRFNVNNNIISAQMDYAGGVKFGIMLTEMHGTQEETQAAIAWLQDHHVKVEVLGYV</sequence>
<accession>Q8ZRM9</accession>